<accession>Q1AU35</accession>
<comment type="function">
    <text evidence="1">Binds the lower part of the 30S subunit head. Binds mRNA in the 70S ribosome, positioning it for translation.</text>
</comment>
<comment type="subunit">
    <text evidence="1">Part of the 30S ribosomal subunit. Forms a tight complex with proteins S10 and S14.</text>
</comment>
<comment type="similarity">
    <text evidence="1">Belongs to the universal ribosomal protein uS3 family.</text>
</comment>
<sequence length="218" mass="24266">MGQKVHPEGFRLGVRRKGEKVDFKSQWYSDRDFAELLGEDLKIREHIERKLARAGIAEIEIKKAAEQGEVVVDIHTARPGIVIGKGGSEVDALRRDLERLTSKKVQVNVREVSRPELNAKLVAESIAEQLEGRAAFRRTMKRALTSAMRSGAVGARIQCSGRLGGIEMSRSETVSEGKVPLHTLDADIDYGFKEANTQMGQIGVKVWINHGIHTDEER</sequence>
<gene>
    <name evidence="1" type="primary">rpsC</name>
    <name type="ordered locus">Rxyl_2149</name>
</gene>
<evidence type="ECO:0000255" key="1">
    <source>
        <dbReference type="HAMAP-Rule" id="MF_01309"/>
    </source>
</evidence>
<evidence type="ECO:0000305" key="2"/>
<name>RS3_RUBXD</name>
<keyword id="KW-1185">Reference proteome</keyword>
<keyword id="KW-0687">Ribonucleoprotein</keyword>
<keyword id="KW-0689">Ribosomal protein</keyword>
<keyword id="KW-0694">RNA-binding</keyword>
<keyword id="KW-0699">rRNA-binding</keyword>
<reference key="1">
    <citation type="submission" date="2006-06" db="EMBL/GenBank/DDBJ databases">
        <title>Complete sequence of Rubrobacter xylanophilus DSM 9941.</title>
        <authorList>
            <consortium name="US DOE Joint Genome Institute"/>
            <person name="Copeland A."/>
            <person name="Lucas S."/>
            <person name="Lapidus A."/>
            <person name="Barry K."/>
            <person name="Detter J.C."/>
            <person name="Glavina del Rio T."/>
            <person name="Hammon N."/>
            <person name="Israni S."/>
            <person name="Dalin E."/>
            <person name="Tice H."/>
            <person name="Pitluck S."/>
            <person name="Munk A.C."/>
            <person name="Brettin T."/>
            <person name="Bruce D."/>
            <person name="Han C."/>
            <person name="Tapia R."/>
            <person name="Gilna P."/>
            <person name="Schmutz J."/>
            <person name="Larimer F."/>
            <person name="Land M."/>
            <person name="Hauser L."/>
            <person name="Kyrpides N."/>
            <person name="Lykidis A."/>
            <person name="da Costa M.S."/>
            <person name="Rainey F.A."/>
            <person name="Empadinhas N."/>
            <person name="Jolivet E."/>
            <person name="Battista J.R."/>
            <person name="Richardson P."/>
        </authorList>
    </citation>
    <scope>NUCLEOTIDE SEQUENCE [LARGE SCALE GENOMIC DNA]</scope>
    <source>
        <strain>DSM 9941 / JCM 11954 / NBRC 16129 / PRD-1</strain>
    </source>
</reference>
<proteinExistence type="inferred from homology"/>
<protein>
    <recommendedName>
        <fullName evidence="1">Small ribosomal subunit protein uS3</fullName>
    </recommendedName>
    <alternativeName>
        <fullName evidence="2">30S ribosomal protein S3</fullName>
    </alternativeName>
</protein>
<feature type="chain" id="PRO_0000293873" description="Small ribosomal subunit protein uS3">
    <location>
        <begin position="1"/>
        <end position="218"/>
    </location>
</feature>
<feature type="domain" description="KH type-2" evidence="1">
    <location>
        <begin position="43"/>
        <end position="113"/>
    </location>
</feature>
<dbReference type="EMBL" id="CP000386">
    <property type="protein sequence ID" value="ABG05093.1"/>
    <property type="molecule type" value="Genomic_DNA"/>
</dbReference>
<dbReference type="RefSeq" id="WP_011565108.1">
    <property type="nucleotide sequence ID" value="NC_008148.1"/>
</dbReference>
<dbReference type="SMR" id="Q1AU35"/>
<dbReference type="STRING" id="266117.Rxyl_2149"/>
<dbReference type="KEGG" id="rxy:Rxyl_2149"/>
<dbReference type="eggNOG" id="COG0092">
    <property type="taxonomic scope" value="Bacteria"/>
</dbReference>
<dbReference type="HOGENOM" id="CLU_058591_0_2_11"/>
<dbReference type="OrthoDB" id="9806396at2"/>
<dbReference type="PhylomeDB" id="Q1AU35"/>
<dbReference type="Proteomes" id="UP000006637">
    <property type="component" value="Chromosome"/>
</dbReference>
<dbReference type="GO" id="GO:0022627">
    <property type="term" value="C:cytosolic small ribosomal subunit"/>
    <property type="evidence" value="ECO:0007669"/>
    <property type="project" value="TreeGrafter"/>
</dbReference>
<dbReference type="GO" id="GO:0003729">
    <property type="term" value="F:mRNA binding"/>
    <property type="evidence" value="ECO:0007669"/>
    <property type="project" value="UniProtKB-UniRule"/>
</dbReference>
<dbReference type="GO" id="GO:0019843">
    <property type="term" value="F:rRNA binding"/>
    <property type="evidence" value="ECO:0007669"/>
    <property type="project" value="UniProtKB-UniRule"/>
</dbReference>
<dbReference type="GO" id="GO:0003735">
    <property type="term" value="F:structural constituent of ribosome"/>
    <property type="evidence" value="ECO:0007669"/>
    <property type="project" value="InterPro"/>
</dbReference>
<dbReference type="GO" id="GO:0006412">
    <property type="term" value="P:translation"/>
    <property type="evidence" value="ECO:0007669"/>
    <property type="project" value="UniProtKB-UniRule"/>
</dbReference>
<dbReference type="CDD" id="cd02412">
    <property type="entry name" value="KH-II_30S_S3"/>
    <property type="match status" value="1"/>
</dbReference>
<dbReference type="FunFam" id="3.30.300.20:FF:000001">
    <property type="entry name" value="30S ribosomal protein S3"/>
    <property type="match status" value="1"/>
</dbReference>
<dbReference type="Gene3D" id="3.30.300.20">
    <property type="match status" value="1"/>
</dbReference>
<dbReference type="Gene3D" id="3.30.1140.32">
    <property type="entry name" value="Ribosomal protein S3, C-terminal domain"/>
    <property type="match status" value="1"/>
</dbReference>
<dbReference type="HAMAP" id="MF_01309_B">
    <property type="entry name" value="Ribosomal_uS3_B"/>
    <property type="match status" value="1"/>
</dbReference>
<dbReference type="InterPro" id="IPR004087">
    <property type="entry name" value="KH_dom"/>
</dbReference>
<dbReference type="InterPro" id="IPR015946">
    <property type="entry name" value="KH_dom-like_a/b"/>
</dbReference>
<dbReference type="InterPro" id="IPR004044">
    <property type="entry name" value="KH_dom_type_2"/>
</dbReference>
<dbReference type="InterPro" id="IPR009019">
    <property type="entry name" value="KH_sf_prok-type"/>
</dbReference>
<dbReference type="InterPro" id="IPR036419">
    <property type="entry name" value="Ribosomal_S3_C_sf"/>
</dbReference>
<dbReference type="InterPro" id="IPR005704">
    <property type="entry name" value="Ribosomal_uS3_bac-typ"/>
</dbReference>
<dbReference type="InterPro" id="IPR001351">
    <property type="entry name" value="Ribosomal_uS3_C"/>
</dbReference>
<dbReference type="InterPro" id="IPR018280">
    <property type="entry name" value="Ribosomal_uS3_CS"/>
</dbReference>
<dbReference type="NCBIfam" id="TIGR01009">
    <property type="entry name" value="rpsC_bact"/>
    <property type="match status" value="1"/>
</dbReference>
<dbReference type="PANTHER" id="PTHR11760">
    <property type="entry name" value="30S/40S RIBOSOMAL PROTEIN S3"/>
    <property type="match status" value="1"/>
</dbReference>
<dbReference type="PANTHER" id="PTHR11760:SF19">
    <property type="entry name" value="SMALL RIBOSOMAL SUBUNIT PROTEIN US3C"/>
    <property type="match status" value="1"/>
</dbReference>
<dbReference type="Pfam" id="PF07650">
    <property type="entry name" value="KH_2"/>
    <property type="match status" value="1"/>
</dbReference>
<dbReference type="Pfam" id="PF00189">
    <property type="entry name" value="Ribosomal_S3_C"/>
    <property type="match status" value="1"/>
</dbReference>
<dbReference type="SMART" id="SM00322">
    <property type="entry name" value="KH"/>
    <property type="match status" value="1"/>
</dbReference>
<dbReference type="SUPFAM" id="SSF54814">
    <property type="entry name" value="Prokaryotic type KH domain (KH-domain type II)"/>
    <property type="match status" value="1"/>
</dbReference>
<dbReference type="SUPFAM" id="SSF54821">
    <property type="entry name" value="Ribosomal protein S3 C-terminal domain"/>
    <property type="match status" value="1"/>
</dbReference>
<dbReference type="PROSITE" id="PS50823">
    <property type="entry name" value="KH_TYPE_2"/>
    <property type="match status" value="1"/>
</dbReference>
<dbReference type="PROSITE" id="PS00548">
    <property type="entry name" value="RIBOSOMAL_S3"/>
    <property type="match status" value="1"/>
</dbReference>
<organism>
    <name type="scientific">Rubrobacter xylanophilus (strain DSM 9941 / JCM 11954 / NBRC 16129 / PRD-1)</name>
    <dbReference type="NCBI Taxonomy" id="266117"/>
    <lineage>
        <taxon>Bacteria</taxon>
        <taxon>Bacillati</taxon>
        <taxon>Actinomycetota</taxon>
        <taxon>Rubrobacteria</taxon>
        <taxon>Rubrobacterales</taxon>
        <taxon>Rubrobacteraceae</taxon>
        <taxon>Rubrobacter</taxon>
    </lineage>
</organism>